<sequence length="326" mass="36236">MNIWQSTSIITWLLAPFSLLFWLVSQIRLFLFRKKILKSYRSPVPVLVVGNISVGGNGKTPVVVWLVEQLQQRGVKVGVISRGYGGKSKDFPQLVTNQSSAEMVGDEPVLIVQRTGVPLAISANRQQSIELLLNQFKLDLIVTDDGLQHYALQRDIEWVVVDGIRRFGNGFVLPAGGLRELPSRLQSVQAIICNGGKAQPNEHLMTLEPEFAVNLRTGEQKPITDFIGQECVAIAGIGHPPRFFNMLENLGVKLLKTQGFADHQAFEPAQLKALAAEQIPLLMTEKDAVKCRTFAQQNWWYVPVSAKFSPESTACLLEPILKRLGK</sequence>
<proteinExistence type="inferred from homology"/>
<comment type="function">
    <text evidence="1">Transfers the gamma-phosphate of ATP to the 4'-position of a tetraacyldisaccharide 1-phosphate intermediate (termed DS-1-P) to form tetraacyldisaccharide 1,4'-bis-phosphate (lipid IVA).</text>
</comment>
<comment type="catalytic activity">
    <reaction evidence="1">
        <text>a lipid A disaccharide + ATP = a lipid IVA + ADP + H(+)</text>
        <dbReference type="Rhea" id="RHEA:67840"/>
        <dbReference type="ChEBI" id="CHEBI:15378"/>
        <dbReference type="ChEBI" id="CHEBI:30616"/>
        <dbReference type="ChEBI" id="CHEBI:176343"/>
        <dbReference type="ChEBI" id="CHEBI:176425"/>
        <dbReference type="ChEBI" id="CHEBI:456216"/>
        <dbReference type="EC" id="2.7.1.130"/>
    </reaction>
</comment>
<comment type="pathway">
    <text evidence="1">Glycolipid biosynthesis; lipid IV(A) biosynthesis; lipid IV(A) from (3R)-3-hydroxytetradecanoyl-[acyl-carrier-protein] and UDP-N-acetyl-alpha-D-glucosamine: step 6/6.</text>
</comment>
<comment type="similarity">
    <text evidence="1">Belongs to the LpxK family.</text>
</comment>
<name>LPXK_ACTPJ</name>
<protein>
    <recommendedName>
        <fullName evidence="1">Tetraacyldisaccharide 4'-kinase</fullName>
        <ecNumber evidence="1">2.7.1.130</ecNumber>
    </recommendedName>
    <alternativeName>
        <fullName evidence="1">Lipid A 4'-kinase</fullName>
    </alternativeName>
</protein>
<accession>B0BQL1</accession>
<keyword id="KW-0067">ATP-binding</keyword>
<keyword id="KW-0418">Kinase</keyword>
<keyword id="KW-0441">Lipid A biosynthesis</keyword>
<keyword id="KW-0444">Lipid biosynthesis</keyword>
<keyword id="KW-0443">Lipid metabolism</keyword>
<keyword id="KW-0547">Nucleotide-binding</keyword>
<keyword id="KW-0808">Transferase</keyword>
<evidence type="ECO:0000255" key="1">
    <source>
        <dbReference type="HAMAP-Rule" id="MF_00409"/>
    </source>
</evidence>
<gene>
    <name evidence="1" type="primary">lpxK</name>
    <name type="ordered locus">APJL_1290</name>
</gene>
<dbReference type="EC" id="2.7.1.130" evidence="1"/>
<dbReference type="EMBL" id="CP000687">
    <property type="protein sequence ID" value="ABY69846.1"/>
    <property type="molecule type" value="Genomic_DNA"/>
</dbReference>
<dbReference type="RefSeq" id="WP_005608502.1">
    <property type="nucleotide sequence ID" value="NC_010278.1"/>
</dbReference>
<dbReference type="SMR" id="B0BQL1"/>
<dbReference type="KEGG" id="apj:APJL_1290"/>
<dbReference type="HOGENOM" id="CLU_038816_2_0_6"/>
<dbReference type="UniPathway" id="UPA00359">
    <property type="reaction ID" value="UER00482"/>
</dbReference>
<dbReference type="Proteomes" id="UP000008547">
    <property type="component" value="Chromosome"/>
</dbReference>
<dbReference type="GO" id="GO:0005886">
    <property type="term" value="C:plasma membrane"/>
    <property type="evidence" value="ECO:0007669"/>
    <property type="project" value="TreeGrafter"/>
</dbReference>
<dbReference type="GO" id="GO:0005524">
    <property type="term" value="F:ATP binding"/>
    <property type="evidence" value="ECO:0007669"/>
    <property type="project" value="UniProtKB-UniRule"/>
</dbReference>
<dbReference type="GO" id="GO:0009029">
    <property type="term" value="F:tetraacyldisaccharide 4'-kinase activity"/>
    <property type="evidence" value="ECO:0007669"/>
    <property type="project" value="UniProtKB-UniRule"/>
</dbReference>
<dbReference type="GO" id="GO:0009245">
    <property type="term" value="P:lipid A biosynthetic process"/>
    <property type="evidence" value="ECO:0007669"/>
    <property type="project" value="UniProtKB-UniRule"/>
</dbReference>
<dbReference type="GO" id="GO:0009244">
    <property type="term" value="P:lipopolysaccharide core region biosynthetic process"/>
    <property type="evidence" value="ECO:0007669"/>
    <property type="project" value="TreeGrafter"/>
</dbReference>
<dbReference type="HAMAP" id="MF_00409">
    <property type="entry name" value="LpxK"/>
    <property type="match status" value="1"/>
</dbReference>
<dbReference type="InterPro" id="IPR003758">
    <property type="entry name" value="LpxK"/>
</dbReference>
<dbReference type="InterPro" id="IPR027417">
    <property type="entry name" value="P-loop_NTPase"/>
</dbReference>
<dbReference type="NCBIfam" id="TIGR00682">
    <property type="entry name" value="lpxK"/>
    <property type="match status" value="1"/>
</dbReference>
<dbReference type="PANTHER" id="PTHR42724">
    <property type="entry name" value="TETRAACYLDISACCHARIDE 4'-KINASE"/>
    <property type="match status" value="1"/>
</dbReference>
<dbReference type="PANTHER" id="PTHR42724:SF1">
    <property type="entry name" value="TETRAACYLDISACCHARIDE 4'-KINASE, MITOCHONDRIAL-RELATED"/>
    <property type="match status" value="1"/>
</dbReference>
<dbReference type="Pfam" id="PF02606">
    <property type="entry name" value="LpxK"/>
    <property type="match status" value="1"/>
</dbReference>
<dbReference type="SUPFAM" id="SSF52540">
    <property type="entry name" value="P-loop containing nucleoside triphosphate hydrolases"/>
    <property type="match status" value="1"/>
</dbReference>
<feature type="chain" id="PRO_1000191517" description="Tetraacyldisaccharide 4'-kinase">
    <location>
        <begin position="1"/>
        <end position="326"/>
    </location>
</feature>
<feature type="binding site" evidence="1">
    <location>
        <begin position="53"/>
        <end position="60"/>
    </location>
    <ligand>
        <name>ATP</name>
        <dbReference type="ChEBI" id="CHEBI:30616"/>
    </ligand>
</feature>
<organism>
    <name type="scientific">Actinobacillus pleuropneumoniae serotype 3 (strain JL03)</name>
    <dbReference type="NCBI Taxonomy" id="434271"/>
    <lineage>
        <taxon>Bacteria</taxon>
        <taxon>Pseudomonadati</taxon>
        <taxon>Pseudomonadota</taxon>
        <taxon>Gammaproteobacteria</taxon>
        <taxon>Pasteurellales</taxon>
        <taxon>Pasteurellaceae</taxon>
        <taxon>Actinobacillus</taxon>
    </lineage>
</organism>
<reference key="1">
    <citation type="journal article" date="2008" name="PLoS ONE">
        <title>Genome biology of Actinobacillus pleuropneumoniae JL03, an isolate of serotype 3 prevalent in China.</title>
        <authorList>
            <person name="Xu Z."/>
            <person name="Zhou Y."/>
            <person name="Li L."/>
            <person name="Zhou R."/>
            <person name="Xiao S."/>
            <person name="Wan Y."/>
            <person name="Zhang S."/>
            <person name="Wang K."/>
            <person name="Li W."/>
            <person name="Li L."/>
            <person name="Jin H."/>
            <person name="Kang M."/>
            <person name="Dalai B."/>
            <person name="Li T."/>
            <person name="Liu L."/>
            <person name="Cheng Y."/>
            <person name="Zhang L."/>
            <person name="Xu T."/>
            <person name="Zheng H."/>
            <person name="Pu S."/>
            <person name="Wang B."/>
            <person name="Gu W."/>
            <person name="Zhang X.L."/>
            <person name="Zhu G.-F."/>
            <person name="Wang S."/>
            <person name="Zhao G.-P."/>
            <person name="Chen H."/>
        </authorList>
    </citation>
    <scope>NUCLEOTIDE SEQUENCE [LARGE SCALE GENOMIC DNA]</scope>
    <source>
        <strain>JL03</strain>
    </source>
</reference>